<dbReference type="EC" id="2.7.1.144" evidence="1"/>
<dbReference type="EMBL" id="CP000703">
    <property type="protein sequence ID" value="ABQ50005.1"/>
    <property type="molecule type" value="Genomic_DNA"/>
</dbReference>
<dbReference type="RefSeq" id="WP_000604134.1">
    <property type="nucleotide sequence ID" value="NC_009487.1"/>
</dbReference>
<dbReference type="SMR" id="A5IUY2"/>
<dbReference type="KEGG" id="saj:SaurJH9_2224"/>
<dbReference type="HOGENOM" id="CLU_050013_5_0_9"/>
<dbReference type="UniPathway" id="UPA00704">
    <property type="reaction ID" value="UER00715"/>
</dbReference>
<dbReference type="GO" id="GO:0005829">
    <property type="term" value="C:cytosol"/>
    <property type="evidence" value="ECO:0007669"/>
    <property type="project" value="TreeGrafter"/>
</dbReference>
<dbReference type="GO" id="GO:0005524">
    <property type="term" value="F:ATP binding"/>
    <property type="evidence" value="ECO:0007669"/>
    <property type="project" value="UniProtKB-KW"/>
</dbReference>
<dbReference type="GO" id="GO:0008443">
    <property type="term" value="F:phosphofructokinase activity"/>
    <property type="evidence" value="ECO:0007669"/>
    <property type="project" value="TreeGrafter"/>
</dbReference>
<dbReference type="GO" id="GO:0009024">
    <property type="term" value="F:tagatose-6-phosphate kinase activity"/>
    <property type="evidence" value="ECO:0007669"/>
    <property type="project" value="UniProtKB-UniRule"/>
</dbReference>
<dbReference type="GO" id="GO:2001059">
    <property type="term" value="P:D-tagatose 6-phosphate catabolic process"/>
    <property type="evidence" value="ECO:0007669"/>
    <property type="project" value="UniProtKB-UniRule"/>
</dbReference>
<dbReference type="GO" id="GO:0019512">
    <property type="term" value="P:lactose catabolic process via tagatose-6-phosphate"/>
    <property type="evidence" value="ECO:0007669"/>
    <property type="project" value="InterPro"/>
</dbReference>
<dbReference type="CDD" id="cd01164">
    <property type="entry name" value="FruK_PfkB_like"/>
    <property type="match status" value="1"/>
</dbReference>
<dbReference type="FunFam" id="3.40.1190.20:FF:000001">
    <property type="entry name" value="Phosphofructokinase"/>
    <property type="match status" value="1"/>
</dbReference>
<dbReference type="Gene3D" id="3.40.1190.20">
    <property type="match status" value="1"/>
</dbReference>
<dbReference type="HAMAP" id="MF_01557">
    <property type="entry name" value="LacC"/>
    <property type="match status" value="1"/>
</dbReference>
<dbReference type="InterPro" id="IPR002173">
    <property type="entry name" value="Carboh/pur_kinase_PfkB_CS"/>
</dbReference>
<dbReference type="InterPro" id="IPR005926">
    <property type="entry name" value="LacC"/>
</dbReference>
<dbReference type="InterPro" id="IPR011611">
    <property type="entry name" value="PfkB_dom"/>
</dbReference>
<dbReference type="InterPro" id="IPR029056">
    <property type="entry name" value="Ribokinase-like"/>
</dbReference>
<dbReference type="InterPro" id="IPR017583">
    <property type="entry name" value="Tagatose/fructose_Pkinase"/>
</dbReference>
<dbReference type="NCBIfam" id="TIGR03168">
    <property type="entry name" value="1-PFK"/>
    <property type="match status" value="1"/>
</dbReference>
<dbReference type="NCBIfam" id="TIGR01231">
    <property type="entry name" value="lacC"/>
    <property type="match status" value="1"/>
</dbReference>
<dbReference type="NCBIfam" id="NF010033">
    <property type="entry name" value="PRK13508.1"/>
    <property type="match status" value="1"/>
</dbReference>
<dbReference type="PANTHER" id="PTHR46566:SF5">
    <property type="entry name" value="1-PHOSPHOFRUCTOKINASE"/>
    <property type="match status" value="1"/>
</dbReference>
<dbReference type="PANTHER" id="PTHR46566">
    <property type="entry name" value="1-PHOSPHOFRUCTOKINASE-RELATED"/>
    <property type="match status" value="1"/>
</dbReference>
<dbReference type="Pfam" id="PF00294">
    <property type="entry name" value="PfkB"/>
    <property type="match status" value="1"/>
</dbReference>
<dbReference type="PIRSF" id="PIRSF000535">
    <property type="entry name" value="1PFK/6PFK/LacC"/>
    <property type="match status" value="1"/>
</dbReference>
<dbReference type="SUPFAM" id="SSF53613">
    <property type="entry name" value="Ribokinase-like"/>
    <property type="match status" value="1"/>
</dbReference>
<dbReference type="PROSITE" id="PS00583">
    <property type="entry name" value="PFKB_KINASES_1"/>
    <property type="match status" value="1"/>
</dbReference>
<dbReference type="PROSITE" id="PS00584">
    <property type="entry name" value="PFKB_KINASES_2"/>
    <property type="match status" value="1"/>
</dbReference>
<feature type="chain" id="PRO_1000087791" description="Tagatose-6-phosphate kinase">
    <location>
        <begin position="1"/>
        <end position="310"/>
    </location>
</feature>
<accession>A5IUY2</accession>
<name>LACC_STAA9</name>
<evidence type="ECO:0000255" key="1">
    <source>
        <dbReference type="HAMAP-Rule" id="MF_01557"/>
    </source>
</evidence>
<gene>
    <name evidence="1" type="primary">lacC</name>
    <name type="ordered locus">SaurJH9_2224</name>
</gene>
<organism>
    <name type="scientific">Staphylococcus aureus (strain JH9)</name>
    <dbReference type="NCBI Taxonomy" id="359786"/>
    <lineage>
        <taxon>Bacteria</taxon>
        <taxon>Bacillati</taxon>
        <taxon>Bacillota</taxon>
        <taxon>Bacilli</taxon>
        <taxon>Bacillales</taxon>
        <taxon>Staphylococcaceae</taxon>
        <taxon>Staphylococcus</taxon>
    </lineage>
</organism>
<comment type="catalytic activity">
    <reaction evidence="1">
        <text>D-tagatofuranose 6-phosphate + ATP = D-tagatofuranose 1,6-bisphosphate + ADP + H(+)</text>
        <dbReference type="Rhea" id="RHEA:12420"/>
        <dbReference type="ChEBI" id="CHEBI:15378"/>
        <dbReference type="ChEBI" id="CHEBI:30616"/>
        <dbReference type="ChEBI" id="CHEBI:58694"/>
        <dbReference type="ChEBI" id="CHEBI:58695"/>
        <dbReference type="ChEBI" id="CHEBI:456216"/>
        <dbReference type="EC" id="2.7.1.144"/>
    </reaction>
</comment>
<comment type="pathway">
    <text evidence="1">Carbohydrate metabolism; D-tagatose 6-phosphate degradation; D-glyceraldehyde 3-phosphate and glycerone phosphate from D-tagatose 6-phosphate: step 1/2.</text>
</comment>
<comment type="similarity">
    <text evidence="1">Belongs to the carbohydrate kinase PfkB family. LacC subfamily.</text>
</comment>
<proteinExistence type="inferred from homology"/>
<protein>
    <recommendedName>
        <fullName evidence="1">Tagatose-6-phosphate kinase</fullName>
        <ecNumber evidence="1">2.7.1.144</ecNumber>
    </recommendedName>
    <alternativeName>
        <fullName evidence="1">Phosphotagatokinase</fullName>
    </alternativeName>
</protein>
<sequence>MILTLTLNPSVDISYPLTALKLDDVNRVQEVSKTAGGKGLNVTRVLAQVGEPVLASGFIGGELGQFIAKKLDHADIKHAFYNIKGETRNCIAILHEGQQTEILEQGPEIDNQEAAGFIKHFEQLLEKVEAVAISGSLPKGLNQDYYAQIIERCQNKGVPVILDCSGATLQTVLENPYKPTVIKPNISELYQLLNQPLDESLESLKQAVSQPLFEGIEWIIVSLGAQGAFAKHNHTFYRVNIPTINVLNPVGSGDSTVAGITSAILNHENDHDLLKKANTLGMLNAQEAQTGYVNLNNYDELFNQIEVLEV</sequence>
<reference key="1">
    <citation type="submission" date="2007-05" db="EMBL/GenBank/DDBJ databases">
        <title>Complete sequence of chromosome of Staphylococcus aureus subsp. aureus JH9.</title>
        <authorList>
            <consortium name="US DOE Joint Genome Institute"/>
            <person name="Copeland A."/>
            <person name="Lucas S."/>
            <person name="Lapidus A."/>
            <person name="Barry K."/>
            <person name="Detter J.C."/>
            <person name="Glavina del Rio T."/>
            <person name="Hammon N."/>
            <person name="Israni S."/>
            <person name="Pitluck S."/>
            <person name="Chain P."/>
            <person name="Malfatti S."/>
            <person name="Shin M."/>
            <person name="Vergez L."/>
            <person name="Schmutz J."/>
            <person name="Larimer F."/>
            <person name="Land M."/>
            <person name="Hauser L."/>
            <person name="Kyrpides N."/>
            <person name="Kim E."/>
            <person name="Tomasz A."/>
            <person name="Richardson P."/>
        </authorList>
    </citation>
    <scope>NUCLEOTIDE SEQUENCE [LARGE SCALE GENOMIC DNA]</scope>
    <source>
        <strain>JH9</strain>
    </source>
</reference>
<keyword id="KW-0067">ATP-binding</keyword>
<keyword id="KW-0418">Kinase</keyword>
<keyword id="KW-0423">Lactose metabolism</keyword>
<keyword id="KW-0547">Nucleotide-binding</keyword>
<keyword id="KW-0808">Transferase</keyword>